<gene>
    <name type="primary">mt-cyb</name>
    <name type="synonym">cob</name>
    <name type="synonym">cytb</name>
    <name type="synonym">mtcyb</name>
</gene>
<feature type="chain" id="PRO_0000061317" description="Cytochrome b">
    <location>
        <begin position="1"/>
        <end position="380"/>
    </location>
</feature>
<feature type="transmembrane region" description="Helical" evidence="2">
    <location>
        <begin position="33"/>
        <end position="53"/>
    </location>
</feature>
<feature type="transmembrane region" description="Helical" evidence="2">
    <location>
        <begin position="77"/>
        <end position="98"/>
    </location>
</feature>
<feature type="transmembrane region" description="Helical" evidence="2">
    <location>
        <begin position="113"/>
        <end position="133"/>
    </location>
</feature>
<feature type="transmembrane region" description="Helical" evidence="2">
    <location>
        <begin position="178"/>
        <end position="198"/>
    </location>
</feature>
<feature type="transmembrane region" description="Helical" evidence="2">
    <location>
        <begin position="226"/>
        <end position="246"/>
    </location>
</feature>
<feature type="transmembrane region" description="Helical" evidence="2">
    <location>
        <begin position="288"/>
        <end position="308"/>
    </location>
</feature>
<feature type="transmembrane region" description="Helical" evidence="2">
    <location>
        <begin position="320"/>
        <end position="340"/>
    </location>
</feature>
<feature type="transmembrane region" description="Helical" evidence="2">
    <location>
        <begin position="347"/>
        <end position="367"/>
    </location>
</feature>
<feature type="binding site" description="axial binding residue" evidence="2">
    <location>
        <position position="83"/>
    </location>
    <ligand>
        <name>heme b</name>
        <dbReference type="ChEBI" id="CHEBI:60344"/>
        <label>b562</label>
    </ligand>
    <ligandPart>
        <name>Fe</name>
        <dbReference type="ChEBI" id="CHEBI:18248"/>
    </ligandPart>
</feature>
<feature type="binding site" description="axial binding residue" evidence="2">
    <location>
        <position position="97"/>
    </location>
    <ligand>
        <name>heme b</name>
        <dbReference type="ChEBI" id="CHEBI:60344"/>
        <label>b566</label>
    </ligand>
    <ligandPart>
        <name>Fe</name>
        <dbReference type="ChEBI" id="CHEBI:18248"/>
    </ligandPart>
</feature>
<feature type="binding site" description="axial binding residue" evidence="2">
    <location>
        <position position="182"/>
    </location>
    <ligand>
        <name>heme b</name>
        <dbReference type="ChEBI" id="CHEBI:60344"/>
        <label>b562</label>
    </ligand>
    <ligandPart>
        <name>Fe</name>
        <dbReference type="ChEBI" id="CHEBI:18248"/>
    </ligandPart>
</feature>
<feature type="binding site" description="axial binding residue" evidence="2">
    <location>
        <position position="196"/>
    </location>
    <ligand>
        <name>heme b</name>
        <dbReference type="ChEBI" id="CHEBI:60344"/>
        <label>b566</label>
    </ligand>
    <ligandPart>
        <name>Fe</name>
        <dbReference type="ChEBI" id="CHEBI:18248"/>
    </ligandPart>
</feature>
<feature type="binding site" evidence="2">
    <location>
        <position position="201"/>
    </location>
    <ligand>
        <name>a ubiquinone</name>
        <dbReference type="ChEBI" id="CHEBI:16389"/>
    </ligand>
</feature>
<name>CYB_ONCKE</name>
<evidence type="ECO:0000250" key="1"/>
<evidence type="ECO:0000250" key="2">
    <source>
        <dbReference type="UniProtKB" id="P00157"/>
    </source>
</evidence>
<evidence type="ECO:0000255" key="3">
    <source>
        <dbReference type="PROSITE-ProRule" id="PRU00967"/>
    </source>
</evidence>
<evidence type="ECO:0000255" key="4">
    <source>
        <dbReference type="PROSITE-ProRule" id="PRU00968"/>
    </source>
</evidence>
<proteinExistence type="inferred from homology"/>
<reference key="1">
    <citation type="submission" date="1999-02" db="EMBL/GenBank/DDBJ databases">
        <title>Genetic relationships of six salmonids in Korean waters: direct sequence analysis of the mitochondrial cytochrome b genes.</title>
        <authorList>
            <person name="Lee H.J."/>
            <person name="Kim W.J."/>
            <person name="Lee J.H."/>
            <person name="Min K.S."/>
            <person name="Yoo M.A."/>
            <person name="Lee W.H."/>
            <person name="Park J.Y."/>
        </authorList>
    </citation>
    <scope>NUCLEOTIDE SEQUENCE [GENOMIC DNA]</scope>
</reference>
<accession>Q9XM10</accession>
<sequence>MANLRKTHPLLKIANDALVDLPAPSNISVWWNFGSLLGLCLATQILTGLFLAMHYTSDISTAFSSVCHICRDVSYGWLIRNIHANGASFFFICIYMHIARGLYYGSYLYKETWNIGVVLLLLTMMTAFVGYVLPWGQMSFWGATVITNLLSAVPYVGGALVQWIWGGFSVDNATLTRFFAFHFLFPFVIAAATVLHLLFLHETGSNNPAGINSDADKISFHPYFSYKDLLGFVAMLLGLTSLALFAPNLLGDPDNFTPANPLVTPPHIKPEWYFLFAYAILRSIPNKLGGVLALLFSILVLMVVPILHTSKQRGLTFRPLTQFLFWALVADMLILTWIGGMPVEHPFIIIGQIASVIYFTIFLVLSPLAGWAENKALQWA</sequence>
<keyword id="KW-0249">Electron transport</keyword>
<keyword id="KW-0349">Heme</keyword>
<keyword id="KW-0408">Iron</keyword>
<keyword id="KW-0472">Membrane</keyword>
<keyword id="KW-0479">Metal-binding</keyword>
<keyword id="KW-0496">Mitochondrion</keyword>
<keyword id="KW-0999">Mitochondrion inner membrane</keyword>
<keyword id="KW-0679">Respiratory chain</keyword>
<keyword id="KW-0812">Transmembrane</keyword>
<keyword id="KW-1133">Transmembrane helix</keyword>
<keyword id="KW-0813">Transport</keyword>
<keyword id="KW-0830">Ubiquinone</keyword>
<organism>
    <name type="scientific">Oncorhynchus keta</name>
    <name type="common">Chum salmon</name>
    <name type="synonym">Salmo keta</name>
    <dbReference type="NCBI Taxonomy" id="8018"/>
    <lineage>
        <taxon>Eukaryota</taxon>
        <taxon>Metazoa</taxon>
        <taxon>Chordata</taxon>
        <taxon>Craniata</taxon>
        <taxon>Vertebrata</taxon>
        <taxon>Euteleostomi</taxon>
        <taxon>Actinopterygii</taxon>
        <taxon>Neopterygii</taxon>
        <taxon>Teleostei</taxon>
        <taxon>Protacanthopterygii</taxon>
        <taxon>Salmoniformes</taxon>
        <taxon>Salmonidae</taxon>
        <taxon>Salmoninae</taxon>
        <taxon>Oncorhynchus</taxon>
    </lineage>
</organism>
<dbReference type="EMBL" id="AF125212">
    <property type="protein sequence ID" value="AAD27702.1"/>
    <property type="molecule type" value="Genomic_DNA"/>
</dbReference>
<dbReference type="SMR" id="Q9XM10"/>
<dbReference type="GO" id="GO:0005743">
    <property type="term" value="C:mitochondrial inner membrane"/>
    <property type="evidence" value="ECO:0007669"/>
    <property type="project" value="UniProtKB-SubCell"/>
</dbReference>
<dbReference type="GO" id="GO:0045275">
    <property type="term" value="C:respiratory chain complex III"/>
    <property type="evidence" value="ECO:0007669"/>
    <property type="project" value="InterPro"/>
</dbReference>
<dbReference type="GO" id="GO:0046872">
    <property type="term" value="F:metal ion binding"/>
    <property type="evidence" value="ECO:0007669"/>
    <property type="project" value="UniProtKB-KW"/>
</dbReference>
<dbReference type="GO" id="GO:0008121">
    <property type="term" value="F:ubiquinol-cytochrome-c reductase activity"/>
    <property type="evidence" value="ECO:0007669"/>
    <property type="project" value="InterPro"/>
</dbReference>
<dbReference type="GO" id="GO:0006122">
    <property type="term" value="P:mitochondrial electron transport, ubiquinol to cytochrome c"/>
    <property type="evidence" value="ECO:0007669"/>
    <property type="project" value="TreeGrafter"/>
</dbReference>
<dbReference type="CDD" id="cd00290">
    <property type="entry name" value="cytochrome_b_C"/>
    <property type="match status" value="1"/>
</dbReference>
<dbReference type="CDD" id="cd00284">
    <property type="entry name" value="Cytochrome_b_N"/>
    <property type="match status" value="1"/>
</dbReference>
<dbReference type="FunFam" id="1.20.810.10:FF:000002">
    <property type="entry name" value="Cytochrome b"/>
    <property type="match status" value="1"/>
</dbReference>
<dbReference type="Gene3D" id="1.20.810.10">
    <property type="entry name" value="Cytochrome Bc1 Complex, Chain C"/>
    <property type="match status" value="1"/>
</dbReference>
<dbReference type="InterPro" id="IPR005798">
    <property type="entry name" value="Cyt_b/b6_C"/>
</dbReference>
<dbReference type="InterPro" id="IPR036150">
    <property type="entry name" value="Cyt_b/b6_C_sf"/>
</dbReference>
<dbReference type="InterPro" id="IPR005797">
    <property type="entry name" value="Cyt_b/b6_N"/>
</dbReference>
<dbReference type="InterPro" id="IPR027387">
    <property type="entry name" value="Cytb/b6-like_sf"/>
</dbReference>
<dbReference type="InterPro" id="IPR030689">
    <property type="entry name" value="Cytochrome_b"/>
</dbReference>
<dbReference type="InterPro" id="IPR048260">
    <property type="entry name" value="Cytochrome_b_C_euk/bac"/>
</dbReference>
<dbReference type="InterPro" id="IPR048259">
    <property type="entry name" value="Cytochrome_b_N_euk/bac"/>
</dbReference>
<dbReference type="InterPro" id="IPR016174">
    <property type="entry name" value="Di-haem_cyt_TM"/>
</dbReference>
<dbReference type="PANTHER" id="PTHR19271">
    <property type="entry name" value="CYTOCHROME B"/>
    <property type="match status" value="1"/>
</dbReference>
<dbReference type="PANTHER" id="PTHR19271:SF16">
    <property type="entry name" value="CYTOCHROME B"/>
    <property type="match status" value="1"/>
</dbReference>
<dbReference type="Pfam" id="PF00032">
    <property type="entry name" value="Cytochrom_B_C"/>
    <property type="match status" value="1"/>
</dbReference>
<dbReference type="Pfam" id="PF00033">
    <property type="entry name" value="Cytochrome_B"/>
    <property type="match status" value="1"/>
</dbReference>
<dbReference type="PIRSF" id="PIRSF038885">
    <property type="entry name" value="COB"/>
    <property type="match status" value="1"/>
</dbReference>
<dbReference type="SUPFAM" id="SSF81648">
    <property type="entry name" value="a domain/subunit of cytochrome bc1 complex (Ubiquinol-cytochrome c reductase)"/>
    <property type="match status" value="1"/>
</dbReference>
<dbReference type="SUPFAM" id="SSF81342">
    <property type="entry name" value="Transmembrane di-heme cytochromes"/>
    <property type="match status" value="1"/>
</dbReference>
<dbReference type="PROSITE" id="PS51003">
    <property type="entry name" value="CYTB_CTER"/>
    <property type="match status" value="1"/>
</dbReference>
<dbReference type="PROSITE" id="PS51002">
    <property type="entry name" value="CYTB_NTER"/>
    <property type="match status" value="1"/>
</dbReference>
<geneLocation type="mitochondrion"/>
<protein>
    <recommendedName>
        <fullName>Cytochrome b</fullName>
    </recommendedName>
    <alternativeName>
        <fullName>Complex III subunit 3</fullName>
    </alternativeName>
    <alternativeName>
        <fullName>Complex III subunit III</fullName>
    </alternativeName>
    <alternativeName>
        <fullName>Cytochrome b-c1 complex subunit 3</fullName>
    </alternativeName>
    <alternativeName>
        <fullName>Ubiquinol-cytochrome-c reductase complex cytochrome b subunit</fullName>
    </alternativeName>
</protein>
<comment type="function">
    <text evidence="2">Component of the ubiquinol-cytochrome c reductase complex (complex III or cytochrome b-c1 complex) that is part of the mitochondrial respiratory chain. The b-c1 complex mediates electron transfer from ubiquinol to cytochrome c. Contributes to the generation of a proton gradient across the mitochondrial membrane that is then used for ATP synthesis.</text>
</comment>
<comment type="cofactor">
    <cofactor evidence="2">
        <name>heme b</name>
        <dbReference type="ChEBI" id="CHEBI:60344"/>
    </cofactor>
    <text evidence="2">Binds 2 heme b groups non-covalently.</text>
</comment>
<comment type="subunit">
    <text evidence="2">The cytochrome bc1 complex contains 3 respiratory subunits (MT-CYB, CYC1 and UQCRFS1), 2 core proteins (UQCRC1 and UQCRC2) and probably 6 low-molecular weight proteins.</text>
</comment>
<comment type="subcellular location">
    <subcellularLocation>
        <location evidence="2">Mitochondrion inner membrane</location>
        <topology evidence="2">Multi-pass membrane protein</topology>
    </subcellularLocation>
</comment>
<comment type="miscellaneous">
    <text evidence="1">Heme 1 (or BL or b562) is low-potential and absorbs at about 562 nm, and heme 2 (or BH or b566) is high-potential and absorbs at about 566 nm.</text>
</comment>
<comment type="similarity">
    <text evidence="3 4">Belongs to the cytochrome b family.</text>
</comment>
<comment type="caution">
    <text evidence="2">The full-length protein contains only eight transmembrane helices, not nine as predicted by bioinformatics tools.</text>
</comment>